<evidence type="ECO:0000250" key="1">
    <source>
        <dbReference type="UniProtKB" id="P46060"/>
    </source>
</evidence>
<evidence type="ECO:0000256" key="2">
    <source>
        <dbReference type="SAM" id="MobiDB-lite"/>
    </source>
</evidence>
<evidence type="ECO:0000269" key="3">
    <source>
    </source>
</evidence>
<evidence type="ECO:0000305" key="4"/>
<evidence type="ECO:0000305" key="5">
    <source>
    </source>
</evidence>
<sequence length="580" mass="62908">MAAEDIAQLADCLAKANVGDGELSFKGKTLKLNTAQDAEEVIREIEEYEGLQALRLEGNTVGVEAAKAIAEVLQRKPDLKRCHWSDMFTGRLRPEIPTALRSLGDALITAGAQLTELDLSDNAFGPDGVRGFEALLKSPTCFTLQELKLNNCGMGIGGGKILAAALTECHKKSSAHGKPLALKVFIAGRNRLENDGATALSEAFRLIGTLEEVHMPQNGINHAGITALAESFKANSLLKVINLNDNTFTEKGGVAMAEALKTLRQVEVINFGDCLVRSKGAQAIASALKEGLHKLKDLNLSYCEIKADAAVSLAESVEDKSDLEKLDLNGNCLGEEGCEQVQEILESINMANILGSLSDDEDEDDDDDDEDDDDDEDDENDDEEVEEEEEEVEEEEGGDNENKEKSKEIPCLSGSAPASPPKLPVDASTFLSFPSPEKLVRMGPRRSAMIAQQVNVADTEKVVQAFIQVSSVYREDGEIKAAVEETIDGLMKEAFENRGFQANVFITSLLVQMGLLKSEDKMKTIPHLNGPLLTLNHMVQQNYFPKSLASTLLAFISKPNGVLENNASARHTLLCNLHNL</sequence>
<dbReference type="EMBL" id="U88155">
    <property type="protein sequence ID" value="AAB62321.1"/>
    <property type="molecule type" value="mRNA"/>
</dbReference>
<dbReference type="SMR" id="O13066"/>
<dbReference type="AGR" id="Xenbase:XB-GENE-6464329"/>
<dbReference type="Xenbase" id="XB-GENE-6464329">
    <property type="gene designation" value="rangap1.S"/>
</dbReference>
<dbReference type="OrthoDB" id="184583at2759"/>
<dbReference type="Proteomes" id="UP000186698">
    <property type="component" value="Unplaced"/>
</dbReference>
<dbReference type="GO" id="GO:0005829">
    <property type="term" value="C:cytosol"/>
    <property type="evidence" value="ECO:0000318"/>
    <property type="project" value="GO_Central"/>
</dbReference>
<dbReference type="GO" id="GO:0000776">
    <property type="term" value="C:kinetochore"/>
    <property type="evidence" value="ECO:0007669"/>
    <property type="project" value="UniProtKB-KW"/>
</dbReference>
<dbReference type="GO" id="GO:0005635">
    <property type="term" value="C:nuclear envelope"/>
    <property type="evidence" value="ECO:0007669"/>
    <property type="project" value="UniProtKB-SubCell"/>
</dbReference>
<dbReference type="GO" id="GO:0005654">
    <property type="term" value="C:nucleoplasm"/>
    <property type="evidence" value="ECO:0007669"/>
    <property type="project" value="UniProtKB-SubCell"/>
</dbReference>
<dbReference type="GO" id="GO:0005634">
    <property type="term" value="C:nucleus"/>
    <property type="evidence" value="ECO:0000318"/>
    <property type="project" value="GO_Central"/>
</dbReference>
<dbReference type="GO" id="GO:0048471">
    <property type="term" value="C:perinuclear region of cytoplasm"/>
    <property type="evidence" value="ECO:0000318"/>
    <property type="project" value="GO_Central"/>
</dbReference>
<dbReference type="GO" id="GO:0005819">
    <property type="term" value="C:spindle"/>
    <property type="evidence" value="ECO:0007669"/>
    <property type="project" value="UniProtKB-SubCell"/>
</dbReference>
<dbReference type="GO" id="GO:0005096">
    <property type="term" value="F:GTPase activator activity"/>
    <property type="evidence" value="ECO:0000318"/>
    <property type="project" value="GO_Central"/>
</dbReference>
<dbReference type="GO" id="GO:0031267">
    <property type="term" value="F:small GTPase binding"/>
    <property type="evidence" value="ECO:0000318"/>
    <property type="project" value="GO_Central"/>
</dbReference>
<dbReference type="GO" id="GO:0051168">
    <property type="term" value="P:nuclear export"/>
    <property type="evidence" value="ECO:0000318"/>
    <property type="project" value="GO_Central"/>
</dbReference>
<dbReference type="GO" id="GO:0007165">
    <property type="term" value="P:signal transduction"/>
    <property type="evidence" value="ECO:0007669"/>
    <property type="project" value="InterPro"/>
</dbReference>
<dbReference type="CDD" id="cd00116">
    <property type="entry name" value="LRR_RI"/>
    <property type="match status" value="1"/>
</dbReference>
<dbReference type="FunFam" id="3.80.10.10:FF:000142">
    <property type="entry name" value="Ran GTPase activating protein 1"/>
    <property type="match status" value="1"/>
</dbReference>
<dbReference type="Gene3D" id="1.25.40.200">
    <property type="entry name" value="Ran-GTPase activating protein 1, C-terminal domain"/>
    <property type="match status" value="1"/>
</dbReference>
<dbReference type="Gene3D" id="3.80.10.10">
    <property type="entry name" value="Ribonuclease Inhibitor"/>
    <property type="match status" value="1"/>
</dbReference>
<dbReference type="InterPro" id="IPR016024">
    <property type="entry name" value="ARM-type_fold"/>
</dbReference>
<dbReference type="InterPro" id="IPR001611">
    <property type="entry name" value="Leu-rich_rpt"/>
</dbReference>
<dbReference type="InterPro" id="IPR032675">
    <property type="entry name" value="LRR_dom_sf"/>
</dbReference>
<dbReference type="InterPro" id="IPR009109">
    <property type="entry name" value="Ran_GTPase_activating_1_C"/>
</dbReference>
<dbReference type="InterPro" id="IPR027038">
    <property type="entry name" value="RanGap"/>
</dbReference>
<dbReference type="InterPro" id="IPR036720">
    <property type="entry name" value="RanGAP1_C_sf"/>
</dbReference>
<dbReference type="PANTHER" id="PTHR24113">
    <property type="entry name" value="RAN GTPASE-ACTIVATING PROTEIN 1"/>
    <property type="match status" value="1"/>
</dbReference>
<dbReference type="PANTHER" id="PTHR24113:SF12">
    <property type="entry name" value="RAN GTPASE-ACTIVATING PROTEIN 1"/>
    <property type="match status" value="1"/>
</dbReference>
<dbReference type="Pfam" id="PF13516">
    <property type="entry name" value="LRR_6"/>
    <property type="match status" value="4"/>
</dbReference>
<dbReference type="Pfam" id="PF07834">
    <property type="entry name" value="RanGAP1_C"/>
    <property type="match status" value="1"/>
</dbReference>
<dbReference type="SMART" id="SM00368">
    <property type="entry name" value="LRR_RI"/>
    <property type="match status" value="8"/>
</dbReference>
<dbReference type="SUPFAM" id="SSF48371">
    <property type="entry name" value="ARM repeat"/>
    <property type="match status" value="1"/>
</dbReference>
<dbReference type="SUPFAM" id="SSF69099">
    <property type="entry name" value="Ran-GTPase activating protein 1 (RanGAP1), C-terminal domain"/>
    <property type="match status" value="1"/>
</dbReference>
<dbReference type="SUPFAM" id="SSF52047">
    <property type="entry name" value="RNI-like"/>
    <property type="match status" value="1"/>
</dbReference>
<organism>
    <name type="scientific">Xenopus laevis</name>
    <name type="common">African clawed frog</name>
    <dbReference type="NCBI Taxonomy" id="8355"/>
    <lineage>
        <taxon>Eukaryota</taxon>
        <taxon>Metazoa</taxon>
        <taxon>Chordata</taxon>
        <taxon>Craniata</taxon>
        <taxon>Vertebrata</taxon>
        <taxon>Euteleostomi</taxon>
        <taxon>Amphibia</taxon>
        <taxon>Batrachia</taxon>
        <taxon>Anura</taxon>
        <taxon>Pipoidea</taxon>
        <taxon>Pipidae</taxon>
        <taxon>Xenopodinae</taxon>
        <taxon>Xenopus</taxon>
        <taxon>Xenopus</taxon>
    </lineage>
</organism>
<proteinExistence type="evidence at protein level"/>
<gene>
    <name type="primary">rangap1</name>
</gene>
<comment type="function">
    <text evidence="1 3">GTPase activator for RAN, converting it to the GDP-bound state (PubMed:9108047). Converts cytoplasmic GTP-bound RAN to GDP-bound RAN, which is required for RAN-mediated nuclear import and export (By similarity).</text>
</comment>
<comment type="subunit">
    <text evidence="1 3">Homodimer (By similarity). Identified in a complex with RANBP2 and the ubiquitin-conjugating enzyme E2 (UBE2I) (PubMed:9108047).</text>
</comment>
<comment type="subcellular location">
    <subcellularLocation>
        <location evidence="1">Cytoplasm</location>
    </subcellularLocation>
    <subcellularLocation>
        <location evidence="1">Nucleus</location>
        <location evidence="1">Nucleoplasm</location>
    </subcellularLocation>
    <subcellularLocation>
        <location evidence="1">Nucleus envelope</location>
    </subcellularLocation>
    <subcellularLocation>
        <location evidence="1">Chromosome</location>
        <location evidence="1">Centromere</location>
        <location evidence="1">Kinetochore</location>
    </subcellularLocation>
    <subcellularLocation>
        <location evidence="1">Cytoplasm</location>
        <location evidence="1">Cytoskeleton</location>
        <location evidence="1">Spindle</location>
    </subcellularLocation>
    <text evidence="1">Cytoplasmic during interphase. Detected at the nuclear envelope during interphase. Targeted to the nuclear pores after sumoylation. During mitosis, associates with mitotic spindles, but is essentially not detected at the spindle poles. Mitotic location also requires sumoylation.</text>
</comment>
<comment type="PTM">
    <text evidence="5">May be sumoylated.</text>
</comment>
<comment type="similarity">
    <text evidence="4">Belongs to the RNA1 family.</text>
</comment>
<keyword id="KW-0137">Centromere</keyword>
<keyword id="KW-0158">Chromosome</keyword>
<keyword id="KW-0963">Cytoplasm</keyword>
<keyword id="KW-0206">Cytoskeleton</keyword>
<keyword id="KW-0343">GTPase activation</keyword>
<keyword id="KW-0995">Kinetochore</keyword>
<keyword id="KW-0433">Leucine-rich repeat</keyword>
<keyword id="KW-0539">Nucleus</keyword>
<keyword id="KW-1185">Reference proteome</keyword>
<keyword id="KW-0677">Repeat</keyword>
<keyword id="KW-0832">Ubl conjugation</keyword>
<name>RAGP1_XENLA</name>
<reference key="1">
    <citation type="journal article" date="1997" name="Proc. Natl. Acad. Sci. U.S.A.">
        <title>RanBP2 associates with Ubc9p and a modified form of RanGAP1.</title>
        <authorList>
            <person name="Saitoh H."/>
            <person name="Pu R."/>
            <person name="Cavenagh M."/>
            <person name="Dasso M."/>
        </authorList>
    </citation>
    <scope>NUCLEOTIDE SEQUENCE [MRNA]</scope>
    <scope>FUNCTION</scope>
    <scope>IDENTIFICATION IN A COMPLEX WITH RANBP2 AND UBE2I</scope>
    <source>
        <tissue>Oocyte</tissue>
    </source>
</reference>
<feature type="chain" id="PRO_0000056739" description="Ran GTPase-activating protein 1">
    <location>
        <begin position="1"/>
        <end position="580"/>
    </location>
</feature>
<feature type="repeat" description="LRR 1">
    <location>
        <begin position="48"/>
        <end position="71"/>
    </location>
</feature>
<feature type="repeat" description="LRR 2">
    <location>
        <begin position="111"/>
        <end position="134"/>
    </location>
</feature>
<feature type="repeat" description="LRR 3">
    <location>
        <begin position="141"/>
        <end position="168"/>
    </location>
</feature>
<feature type="repeat" description="LRR 4">
    <location>
        <begin position="207"/>
        <end position="230"/>
    </location>
</feature>
<feature type="repeat" description="LRR 5">
    <location>
        <begin position="235"/>
        <end position="258"/>
    </location>
</feature>
<feature type="repeat" description="LRR 6">
    <location>
        <begin position="292"/>
        <end position="315"/>
    </location>
</feature>
<feature type="repeat" description="LRR 7">
    <location>
        <begin position="320"/>
        <end position="343"/>
    </location>
</feature>
<feature type="region of interest" description="Disordered" evidence="2">
    <location>
        <begin position="356"/>
        <end position="429"/>
    </location>
</feature>
<feature type="compositionally biased region" description="Acidic residues" evidence="2">
    <location>
        <begin position="358"/>
        <end position="399"/>
    </location>
</feature>
<protein>
    <recommendedName>
        <fullName>Ran GTPase-activating protein 1</fullName>
        <shortName>RanGAP1</shortName>
    </recommendedName>
</protein>
<accession>O13066</accession>